<protein>
    <recommendedName>
        <fullName>Biogenesis of lysosome-related organelles complex 1 subunit 2</fullName>
        <shortName>BLOC-1 subunit 2</shortName>
    </recommendedName>
</protein>
<feature type="chain" id="PRO_0000414727" description="Biogenesis of lysosome-related organelles complex 1 subunit 2">
    <location>
        <begin position="1"/>
        <end position="127"/>
    </location>
</feature>
<feature type="sequence conflict" description="In Ref. 4; AAM64628." evidence="3" ref="4">
    <original>V</original>
    <variation>I</variation>
    <location>
        <position position="44"/>
    </location>
</feature>
<feature type="sequence conflict" description="In Ref. 3; BAD93768." evidence="3" ref="3">
    <original>L</original>
    <variation>P</variation>
    <location>
        <position position="58"/>
    </location>
</feature>
<feature type="sequence conflict" description="In Ref. 4; AAM64628." evidence="3" ref="4">
    <original>N</original>
    <variation>I</variation>
    <location>
        <position position="121"/>
    </location>
</feature>
<proteinExistence type="evidence at protein level"/>
<reference key="1">
    <citation type="journal article" date="2000" name="DNA Res.">
        <title>Structural analysis of Arabidopsis thaliana chromosome 5. X. Sequence features of the regions of 3,076,755 bp covered by sixty P1 and TAC clones.</title>
        <authorList>
            <person name="Sato S."/>
            <person name="Nakamura Y."/>
            <person name="Kaneko T."/>
            <person name="Katoh T."/>
            <person name="Asamizu E."/>
            <person name="Kotani H."/>
            <person name="Tabata S."/>
        </authorList>
    </citation>
    <scope>NUCLEOTIDE SEQUENCE [LARGE SCALE GENOMIC DNA]</scope>
    <source>
        <strain>cv. Columbia</strain>
    </source>
</reference>
<reference key="2">
    <citation type="journal article" date="2017" name="Plant J.">
        <title>Araport11: a complete reannotation of the Arabidopsis thaliana reference genome.</title>
        <authorList>
            <person name="Cheng C.Y."/>
            <person name="Krishnakumar V."/>
            <person name="Chan A.P."/>
            <person name="Thibaud-Nissen F."/>
            <person name="Schobel S."/>
            <person name="Town C.D."/>
        </authorList>
    </citation>
    <scope>GENOME REANNOTATION</scope>
    <source>
        <strain>cv. Columbia</strain>
    </source>
</reference>
<reference key="3">
    <citation type="submission" date="2005-03" db="EMBL/GenBank/DDBJ databases">
        <title>Large-scale analysis of RIKEN Arabidopsis full-length (RAFL) cDNAs.</title>
        <authorList>
            <person name="Totoki Y."/>
            <person name="Seki M."/>
            <person name="Ishida J."/>
            <person name="Nakajima M."/>
            <person name="Enju A."/>
            <person name="Kamiya A."/>
            <person name="Narusaka M."/>
            <person name="Shin-i T."/>
            <person name="Nakagawa M."/>
            <person name="Sakamoto N."/>
            <person name="Oishi K."/>
            <person name="Kohara Y."/>
            <person name="Kobayashi M."/>
            <person name="Toyoda A."/>
            <person name="Sakaki Y."/>
            <person name="Sakurai T."/>
            <person name="Iida K."/>
            <person name="Akiyama K."/>
            <person name="Satou M."/>
            <person name="Toyoda T."/>
            <person name="Konagaya A."/>
            <person name="Carninci P."/>
            <person name="Kawai J."/>
            <person name="Hayashizaki Y."/>
            <person name="Shinozaki K."/>
        </authorList>
    </citation>
    <scope>NUCLEOTIDE SEQUENCE [LARGE SCALE MRNA]</scope>
    <source>
        <strain>cv. Columbia</strain>
    </source>
</reference>
<reference key="4">
    <citation type="submission" date="2002-03" db="EMBL/GenBank/DDBJ databases">
        <title>Full-length cDNA from Arabidopsis thaliana.</title>
        <authorList>
            <person name="Brover V.V."/>
            <person name="Troukhan M.E."/>
            <person name="Alexandrov N.A."/>
            <person name="Lu Y.-P."/>
            <person name="Flavell R.B."/>
            <person name="Feldmann K.A."/>
        </authorList>
    </citation>
    <scope>NUCLEOTIDE SEQUENCE [LARGE SCALE MRNA]</scope>
</reference>
<reference key="5">
    <citation type="journal article" date="2010" name="J. Cell Sci.">
        <title>BLOS1, a putative BLOC-1 subunit, interacts with SNX1 and modulates root growth in Arabidopsis.</title>
        <authorList>
            <person name="Cui Y."/>
            <person name="Li X."/>
            <person name="Chen Q."/>
            <person name="He X."/>
            <person name="Yang Q."/>
            <person name="Zhang A."/>
            <person name="Yu X."/>
            <person name="Chen H."/>
            <person name="Liu N."/>
            <person name="Xie Q."/>
            <person name="Yang W."/>
            <person name="Zuo J."/>
            <person name="Palme K."/>
            <person name="Li W."/>
        </authorList>
    </citation>
    <scope>IDENTIFICATION IN THE BLOC-1 COMPLEX</scope>
    <scope>FUNCTION</scope>
    <scope>INTERACTION WITH BLOS1 AND SNX1</scope>
</reference>
<dbReference type="EMBL" id="AB023033">
    <property type="protein sequence ID" value="BAB10768.1"/>
    <property type="status" value="ALT_SEQ"/>
    <property type="molecule type" value="Genomic_DNA"/>
</dbReference>
<dbReference type="EMBL" id="CP002688">
    <property type="protein sequence ID" value="AED95828.1"/>
    <property type="molecule type" value="Genomic_DNA"/>
</dbReference>
<dbReference type="EMBL" id="AK220691">
    <property type="protein sequence ID" value="BAD93768.1"/>
    <property type="molecule type" value="mRNA"/>
</dbReference>
<dbReference type="EMBL" id="AY087067">
    <property type="protein sequence ID" value="AAM64628.1"/>
    <property type="molecule type" value="mRNA"/>
</dbReference>
<dbReference type="RefSeq" id="NP_568711.1">
    <property type="nucleotide sequence ID" value="NM_124332.3"/>
</dbReference>
<dbReference type="SMR" id="F4K657"/>
<dbReference type="BioGRID" id="20262">
    <property type="interactions" value="1"/>
</dbReference>
<dbReference type="FunCoup" id="F4K657">
    <property type="interactions" value="467"/>
</dbReference>
<dbReference type="IntAct" id="F4K657">
    <property type="interactions" value="2"/>
</dbReference>
<dbReference type="STRING" id="3702.F4K657"/>
<dbReference type="PaxDb" id="3702-AT5G49550.1"/>
<dbReference type="ProteomicsDB" id="240732"/>
<dbReference type="EnsemblPlants" id="AT5G49550.1">
    <property type="protein sequence ID" value="AT5G49550.1"/>
    <property type="gene ID" value="AT5G49550"/>
</dbReference>
<dbReference type="GeneID" id="835016"/>
<dbReference type="Gramene" id="AT5G49550.1">
    <property type="protein sequence ID" value="AT5G49550.1"/>
    <property type="gene ID" value="AT5G49550"/>
</dbReference>
<dbReference type="KEGG" id="ath:AT5G49550"/>
<dbReference type="Araport" id="AT5G49550"/>
<dbReference type="TAIR" id="AT5G49550">
    <property type="gene designation" value="BLOS2"/>
</dbReference>
<dbReference type="eggNOG" id="KOG4254">
    <property type="taxonomic scope" value="Eukaryota"/>
</dbReference>
<dbReference type="HOGENOM" id="CLU_132900_0_0_1"/>
<dbReference type="InParanoid" id="F4K657"/>
<dbReference type="OMA" id="CSDMFEK"/>
<dbReference type="PRO" id="PR:F4K657"/>
<dbReference type="Proteomes" id="UP000006548">
    <property type="component" value="Chromosome 5"/>
</dbReference>
<dbReference type="ExpressionAtlas" id="F4K657">
    <property type="expression patterns" value="baseline and differential"/>
</dbReference>
<dbReference type="GO" id="GO:0031083">
    <property type="term" value="C:BLOC-1 complex"/>
    <property type="evidence" value="ECO:0000304"/>
    <property type="project" value="UniProtKB"/>
</dbReference>
<dbReference type="GO" id="GO:0005768">
    <property type="term" value="C:endosome"/>
    <property type="evidence" value="ECO:0007669"/>
    <property type="project" value="UniProtKB-SubCell"/>
</dbReference>
<dbReference type="InterPro" id="IPR019269">
    <property type="entry name" value="BLOC1_su2"/>
</dbReference>
<dbReference type="PANTHER" id="PTHR47882">
    <property type="entry name" value="BIOGENESIS OF LYSOSOME-RELATED ORGANELLES COMPLEX 1 SUBUNIT 2"/>
    <property type="match status" value="1"/>
</dbReference>
<dbReference type="PANTHER" id="PTHR47882:SF1">
    <property type="entry name" value="BIOGENESIS OF LYSOSOME-RELATED ORGANELLES COMPLEX 1 SUBUNIT 2"/>
    <property type="match status" value="1"/>
</dbReference>
<dbReference type="Pfam" id="PF10046">
    <property type="entry name" value="BLOC1_2"/>
    <property type="match status" value="1"/>
</dbReference>
<comment type="function">
    <text evidence="2">Component of the biogenesis of lysosome-related organelles complex-1 (BLOC-1), a complex that mediates the vacuolar degradative transport via the intracellular vesicle trafficking from the endosome to the vacuole.</text>
</comment>
<comment type="subunit">
    <text evidence="1 2">Component of the biogenesis of lysosome-related organelles complex-1 (BLOC-1) (By similarity). Interacts with BLOS1 and SNX1.</text>
</comment>
<comment type="subcellular location">
    <subcellularLocation>
        <location evidence="1">Cytoplasm</location>
    </subcellularLocation>
    <subcellularLocation>
        <location evidence="3">Endosome</location>
    </subcellularLocation>
</comment>
<comment type="similarity">
    <text evidence="3">Belongs to the BLOC1S2 family.</text>
</comment>
<comment type="sequence caution" evidence="3">
    <conflict type="erroneous gene model prediction">
        <sequence resource="EMBL-CDS" id="BAB10768"/>
    </conflict>
    <text>The predicted gene has been split into 2 genes: At5g49550 and At5g49555.</text>
</comment>
<gene>
    <name type="primary">BLOS2</name>
    <name type="ordered locus">At5g49550</name>
    <name type="ORF">K6M13.19</name>
</gene>
<organism>
    <name type="scientific">Arabidopsis thaliana</name>
    <name type="common">Mouse-ear cress</name>
    <dbReference type="NCBI Taxonomy" id="3702"/>
    <lineage>
        <taxon>Eukaryota</taxon>
        <taxon>Viridiplantae</taxon>
        <taxon>Streptophyta</taxon>
        <taxon>Embryophyta</taxon>
        <taxon>Tracheophyta</taxon>
        <taxon>Spermatophyta</taxon>
        <taxon>Magnoliopsida</taxon>
        <taxon>eudicotyledons</taxon>
        <taxon>Gunneridae</taxon>
        <taxon>Pentapetalae</taxon>
        <taxon>rosids</taxon>
        <taxon>malvids</taxon>
        <taxon>Brassicales</taxon>
        <taxon>Brassicaceae</taxon>
        <taxon>Camelineae</taxon>
        <taxon>Arabidopsis</taxon>
    </lineage>
</organism>
<sequence>MADSRDDLAESLQNLFTSVSSMVKSELQGTNNHLDLLEKMNLRVASEYDDMGDVAAGLRVFAEQMKSKSGGLDEFVGQMDAIEKQVSEFEAVISVLDRYVSVLESKIRAEYRHPHHQRRSNDSVVTD</sequence>
<keyword id="KW-0963">Cytoplasm</keyword>
<keyword id="KW-0967">Endosome</keyword>
<keyword id="KW-1185">Reference proteome</keyword>
<name>BL1S2_ARATH</name>
<accession>F4K657</accession>
<accession>Q570L7</accession>
<accession>Q8LBQ0</accession>
<accession>Q9FGZ1</accession>
<evidence type="ECO:0000250" key="1"/>
<evidence type="ECO:0000269" key="2">
    <source>
    </source>
</evidence>
<evidence type="ECO:0000305" key="3"/>